<accession>B2XWI8</accession>
<organism>
    <name type="scientific">Fagopyrum esculentum subsp. ancestrale</name>
    <name type="common">Wild buckwheat</name>
    <dbReference type="NCBI Taxonomy" id="180217"/>
    <lineage>
        <taxon>Eukaryota</taxon>
        <taxon>Viridiplantae</taxon>
        <taxon>Streptophyta</taxon>
        <taxon>Embryophyta</taxon>
        <taxon>Tracheophyta</taxon>
        <taxon>Spermatophyta</taxon>
        <taxon>Magnoliopsida</taxon>
        <taxon>eudicotyledons</taxon>
        <taxon>Gunneridae</taxon>
        <taxon>Pentapetalae</taxon>
        <taxon>Caryophyllales</taxon>
        <taxon>Polygonaceae</taxon>
        <taxon>Polygonoideae</taxon>
        <taxon>Fagopyreae</taxon>
        <taxon>Fagopyrum</taxon>
    </lineage>
</organism>
<evidence type="ECO:0000250" key="1"/>
<evidence type="ECO:0000255" key="2"/>
<evidence type="ECO:0000305" key="3"/>
<feature type="chain" id="PRO_0000360935" description="NAD(P)H-quinone oxidoreductase subunit 5, chloroplastic">
    <location>
        <begin position="1"/>
        <end position="751"/>
    </location>
</feature>
<feature type="transmembrane region" description="Helical" evidence="2">
    <location>
        <begin position="9"/>
        <end position="29"/>
    </location>
</feature>
<feature type="transmembrane region" description="Helical" evidence="2">
    <location>
        <begin position="40"/>
        <end position="60"/>
    </location>
</feature>
<feature type="transmembrane region" description="Helical" evidence="2">
    <location>
        <begin position="89"/>
        <end position="109"/>
    </location>
</feature>
<feature type="transmembrane region" description="Helical" evidence="2">
    <location>
        <begin position="125"/>
        <end position="145"/>
    </location>
</feature>
<feature type="transmembrane region" description="Helical" evidence="2">
    <location>
        <begin position="147"/>
        <end position="167"/>
    </location>
</feature>
<feature type="transmembrane region" description="Helical" evidence="2">
    <location>
        <begin position="185"/>
        <end position="205"/>
    </location>
</feature>
<feature type="transmembrane region" description="Helical" evidence="2">
    <location>
        <begin position="219"/>
        <end position="239"/>
    </location>
</feature>
<feature type="transmembrane region" description="Helical" evidence="2">
    <location>
        <begin position="258"/>
        <end position="278"/>
    </location>
</feature>
<feature type="transmembrane region" description="Helical" evidence="2">
    <location>
        <begin position="280"/>
        <end position="300"/>
    </location>
</feature>
<feature type="transmembrane region" description="Helical" evidence="2">
    <location>
        <begin position="327"/>
        <end position="347"/>
    </location>
</feature>
<feature type="transmembrane region" description="Helical" evidence="2">
    <location>
        <begin position="354"/>
        <end position="374"/>
    </location>
</feature>
<feature type="transmembrane region" description="Helical" evidence="2">
    <location>
        <begin position="396"/>
        <end position="416"/>
    </location>
</feature>
<feature type="transmembrane region" description="Helical" evidence="2">
    <location>
        <begin position="425"/>
        <end position="445"/>
    </location>
</feature>
<feature type="transmembrane region" description="Helical" evidence="2">
    <location>
        <begin position="543"/>
        <end position="563"/>
    </location>
</feature>
<feature type="transmembrane region" description="Helical" evidence="2">
    <location>
        <begin position="599"/>
        <end position="619"/>
    </location>
</feature>
<feature type="transmembrane region" description="Helical" evidence="2">
    <location>
        <begin position="719"/>
        <end position="739"/>
    </location>
</feature>
<comment type="function">
    <text evidence="1">NDH shuttles electrons from NAD(P)H:plastoquinone, via FMN and iron-sulfur (Fe-S) centers, to quinones in the photosynthetic chain and possibly in a chloroplast respiratory chain. The immediate electron acceptor for the enzyme in this species is believed to be plastoquinone. Couples the redox reaction to proton translocation, and thus conserves the redox energy in a proton gradient (By similarity).</text>
</comment>
<comment type="catalytic activity">
    <reaction>
        <text>a plastoquinone + NADH + (n+1) H(+)(in) = a plastoquinol + NAD(+) + n H(+)(out)</text>
        <dbReference type="Rhea" id="RHEA:42608"/>
        <dbReference type="Rhea" id="RHEA-COMP:9561"/>
        <dbReference type="Rhea" id="RHEA-COMP:9562"/>
        <dbReference type="ChEBI" id="CHEBI:15378"/>
        <dbReference type="ChEBI" id="CHEBI:17757"/>
        <dbReference type="ChEBI" id="CHEBI:57540"/>
        <dbReference type="ChEBI" id="CHEBI:57945"/>
        <dbReference type="ChEBI" id="CHEBI:62192"/>
    </reaction>
</comment>
<comment type="catalytic activity">
    <reaction>
        <text>a plastoquinone + NADPH + (n+1) H(+)(in) = a plastoquinol + NADP(+) + n H(+)(out)</text>
        <dbReference type="Rhea" id="RHEA:42612"/>
        <dbReference type="Rhea" id="RHEA-COMP:9561"/>
        <dbReference type="Rhea" id="RHEA-COMP:9562"/>
        <dbReference type="ChEBI" id="CHEBI:15378"/>
        <dbReference type="ChEBI" id="CHEBI:17757"/>
        <dbReference type="ChEBI" id="CHEBI:57783"/>
        <dbReference type="ChEBI" id="CHEBI:58349"/>
        <dbReference type="ChEBI" id="CHEBI:62192"/>
    </reaction>
</comment>
<comment type="subunit">
    <text evidence="1">NDH is composed of at least 16 different subunits, 5 of which are encoded in the nucleus.</text>
</comment>
<comment type="subcellular location">
    <subcellularLocation>
        <location evidence="1">Plastid</location>
        <location evidence="1">Chloroplast thylakoid membrane</location>
        <topology evidence="1">Multi-pass membrane protein</topology>
    </subcellularLocation>
</comment>
<comment type="similarity">
    <text evidence="3">Belongs to the complex I subunit 5 family.</text>
</comment>
<proteinExistence type="inferred from homology"/>
<keyword id="KW-0150">Chloroplast</keyword>
<keyword id="KW-0472">Membrane</keyword>
<keyword id="KW-0520">NAD</keyword>
<keyword id="KW-0521">NADP</keyword>
<keyword id="KW-0934">Plastid</keyword>
<keyword id="KW-0618">Plastoquinone</keyword>
<keyword id="KW-0874">Quinone</keyword>
<keyword id="KW-0793">Thylakoid</keyword>
<keyword id="KW-1278">Translocase</keyword>
<keyword id="KW-0812">Transmembrane</keyword>
<keyword id="KW-1133">Transmembrane helix</keyword>
<keyword id="KW-0813">Transport</keyword>
<name>NU5C_FAGEA</name>
<dbReference type="EC" id="7.1.1.-"/>
<dbReference type="EMBL" id="EU254477">
    <property type="protein sequence ID" value="ABY79779.1"/>
    <property type="molecule type" value="Genomic_DNA"/>
</dbReference>
<dbReference type="RefSeq" id="YP_001936564.1">
    <property type="nucleotide sequence ID" value="NC_010776.1"/>
</dbReference>
<dbReference type="SMR" id="B2XWI8"/>
<dbReference type="GeneID" id="6335949"/>
<dbReference type="GO" id="GO:0009535">
    <property type="term" value="C:chloroplast thylakoid membrane"/>
    <property type="evidence" value="ECO:0007669"/>
    <property type="project" value="UniProtKB-SubCell"/>
</dbReference>
<dbReference type="GO" id="GO:0008137">
    <property type="term" value="F:NADH dehydrogenase (ubiquinone) activity"/>
    <property type="evidence" value="ECO:0007669"/>
    <property type="project" value="InterPro"/>
</dbReference>
<dbReference type="GO" id="GO:0048038">
    <property type="term" value="F:quinone binding"/>
    <property type="evidence" value="ECO:0007669"/>
    <property type="project" value="UniProtKB-KW"/>
</dbReference>
<dbReference type="GO" id="GO:0042773">
    <property type="term" value="P:ATP synthesis coupled electron transport"/>
    <property type="evidence" value="ECO:0007669"/>
    <property type="project" value="InterPro"/>
</dbReference>
<dbReference type="GO" id="GO:0015990">
    <property type="term" value="P:electron transport coupled proton transport"/>
    <property type="evidence" value="ECO:0007669"/>
    <property type="project" value="TreeGrafter"/>
</dbReference>
<dbReference type="Gene3D" id="1.20.5.2700">
    <property type="match status" value="1"/>
</dbReference>
<dbReference type="InterPro" id="IPR002128">
    <property type="entry name" value="NADH_UbQ_OxRdtase_chlpt_su5_C"/>
</dbReference>
<dbReference type="InterPro" id="IPR018393">
    <property type="entry name" value="NADHpl_OxRdtase_5_subgr"/>
</dbReference>
<dbReference type="InterPro" id="IPR001750">
    <property type="entry name" value="ND/Mrp_TM"/>
</dbReference>
<dbReference type="InterPro" id="IPR003945">
    <property type="entry name" value="NU5C-like"/>
</dbReference>
<dbReference type="InterPro" id="IPR001516">
    <property type="entry name" value="Proton_antipo_N"/>
</dbReference>
<dbReference type="NCBIfam" id="TIGR01974">
    <property type="entry name" value="NDH_I_L"/>
    <property type="match status" value="1"/>
</dbReference>
<dbReference type="NCBIfam" id="NF005141">
    <property type="entry name" value="PRK06590.1"/>
    <property type="match status" value="1"/>
</dbReference>
<dbReference type="PANTHER" id="PTHR42829">
    <property type="entry name" value="NADH-UBIQUINONE OXIDOREDUCTASE CHAIN 5"/>
    <property type="match status" value="1"/>
</dbReference>
<dbReference type="PANTHER" id="PTHR42829:SF2">
    <property type="entry name" value="NADH-UBIQUINONE OXIDOREDUCTASE CHAIN 5"/>
    <property type="match status" value="1"/>
</dbReference>
<dbReference type="Pfam" id="PF01010">
    <property type="entry name" value="Proton_antipo_C"/>
    <property type="match status" value="1"/>
</dbReference>
<dbReference type="Pfam" id="PF00361">
    <property type="entry name" value="Proton_antipo_M"/>
    <property type="match status" value="1"/>
</dbReference>
<dbReference type="Pfam" id="PF00662">
    <property type="entry name" value="Proton_antipo_N"/>
    <property type="match status" value="1"/>
</dbReference>
<dbReference type="PRINTS" id="PR01434">
    <property type="entry name" value="NADHDHGNASE5"/>
</dbReference>
<dbReference type="PRINTS" id="PR01435">
    <property type="entry name" value="NPOXDRDTASE5"/>
</dbReference>
<gene>
    <name type="primary">ndhF</name>
</gene>
<reference key="1">
    <citation type="journal article" date="2008" name="BMC Plant Biol.">
        <title>Comparative chloroplast genomics and phylogenetics of Fagopyrum esculentum ssp. ancestrale - a wild ancestor of cultivated buckwheat.</title>
        <authorList>
            <person name="Logacheva M.D."/>
            <person name="Samigullin T.H."/>
            <person name="Dhingra A."/>
            <person name="Penin A.A."/>
        </authorList>
    </citation>
    <scope>NUCLEOTIDE SEQUENCE [LARGE SCALE GENOMIC DNA]</scope>
</reference>
<geneLocation type="chloroplast"/>
<protein>
    <recommendedName>
        <fullName>NAD(P)H-quinone oxidoreductase subunit 5, chloroplastic</fullName>
        <ecNumber>7.1.1.-</ecNumber>
    </recommendedName>
    <alternativeName>
        <fullName>NAD(P)H dehydrogenase subunit 5</fullName>
    </alternativeName>
    <alternativeName>
        <fullName>NADH-plastoquinone oxidoreductase subunit 5</fullName>
    </alternativeName>
</protein>
<sequence length="751" mass="85106">MEHIYQYTWIIPFIPLTVPLLIGAGLIIFPTTTKNLRRMWAFPSILLLSLVMLFSTKLSIQQINSHYIYQSVWSWTINNDFSLEFGYLVDPLTSIMSMLITTVGILVLIYSDNYMVHDQGYLRFFAYLSFFNTSMLGLVTSSNFIQIYIFWELVGMCSYLLIGFWFTRPIAANACQKAFVTNRVGDFGLLLGILGLYWLTGSFEFRDLFEIFNTLIYNNEVHFLVGTVCTFLLFAGAVAKSAQFPLHVWLPDAMEGPTPISALIHAATMVAAGIFLVARLFPLLIVTPFILNLIALVGIITLFLGATLASCSKDIKRGLAYSTMSQLGYMMLALGMGSYRAALFHLITHAYSKALLFLGSGCVIHSMEAIVGYSPDKSQNMVFMGGLKKHVPITKTAFLLGTLSLSGIPPLACFWSKDEIINDTWLYSPIFAIISWATVGFTAFYMFRIYLLTFEGHLNVHFQNYNGKKSSSVYSISLWGHEGLKPINKNLSLFTLLPIKNNESFYKNPHGDIKKTIQSFLITNNCDNKKIVPYPHESGNTMLFPLLVLIIFTGVIGFIGIPFDQENMDFDILSSWLTPSVNLLHLKLNNKNSFDWSEFLTNATLSVSIAYSGIVLASFLYKPIYSYSSLQNFALINLFAKRHPKRFFSDKIKNVIYDWAHHRGYIDAFYTRYIIRSVRGLSQFINFFDRRVIDGIPNGLGVTSFFVGEGLKYVGGGRISSYLFLYLLYASIFLLIYYFDFTNININFTDQ</sequence>